<name>FLIE_BURMA</name>
<dbReference type="EMBL" id="CP000010">
    <property type="protein sequence ID" value="AAU48882.1"/>
    <property type="molecule type" value="Genomic_DNA"/>
</dbReference>
<dbReference type="RefSeq" id="WP_004185219.1">
    <property type="nucleotide sequence ID" value="NC_006348.1"/>
</dbReference>
<dbReference type="RefSeq" id="YP_104754.1">
    <property type="nucleotide sequence ID" value="NC_006348.1"/>
</dbReference>
<dbReference type="SMR" id="Q62EX3"/>
<dbReference type="GeneID" id="92980950"/>
<dbReference type="KEGG" id="bma:BMA3282"/>
<dbReference type="PATRIC" id="fig|243160.12.peg.3366"/>
<dbReference type="eggNOG" id="COG1677">
    <property type="taxonomic scope" value="Bacteria"/>
</dbReference>
<dbReference type="HOGENOM" id="CLU_147249_0_2_4"/>
<dbReference type="Proteomes" id="UP000006693">
    <property type="component" value="Chromosome 1"/>
</dbReference>
<dbReference type="GO" id="GO:0009425">
    <property type="term" value="C:bacterial-type flagellum basal body"/>
    <property type="evidence" value="ECO:0007669"/>
    <property type="project" value="UniProtKB-SubCell"/>
</dbReference>
<dbReference type="GO" id="GO:0003774">
    <property type="term" value="F:cytoskeletal motor activity"/>
    <property type="evidence" value="ECO:0007669"/>
    <property type="project" value="InterPro"/>
</dbReference>
<dbReference type="GO" id="GO:0005198">
    <property type="term" value="F:structural molecule activity"/>
    <property type="evidence" value="ECO:0007669"/>
    <property type="project" value="InterPro"/>
</dbReference>
<dbReference type="GO" id="GO:0071973">
    <property type="term" value="P:bacterial-type flagellum-dependent cell motility"/>
    <property type="evidence" value="ECO:0007669"/>
    <property type="project" value="InterPro"/>
</dbReference>
<dbReference type="HAMAP" id="MF_00724">
    <property type="entry name" value="FliE"/>
    <property type="match status" value="1"/>
</dbReference>
<dbReference type="InterPro" id="IPR001624">
    <property type="entry name" value="FliE"/>
</dbReference>
<dbReference type="NCBIfam" id="TIGR00205">
    <property type="entry name" value="fliE"/>
    <property type="match status" value="1"/>
</dbReference>
<dbReference type="PANTHER" id="PTHR34653">
    <property type="match status" value="1"/>
</dbReference>
<dbReference type="PANTHER" id="PTHR34653:SF1">
    <property type="entry name" value="FLAGELLAR HOOK-BASAL BODY COMPLEX PROTEIN FLIE"/>
    <property type="match status" value="1"/>
</dbReference>
<dbReference type="Pfam" id="PF02049">
    <property type="entry name" value="FliE"/>
    <property type="match status" value="1"/>
</dbReference>
<dbReference type="PRINTS" id="PR01006">
    <property type="entry name" value="FLGHOOKFLIE"/>
</dbReference>
<reference key="1">
    <citation type="journal article" date="2004" name="Proc. Natl. Acad. Sci. U.S.A.">
        <title>Structural flexibility in the Burkholderia mallei genome.</title>
        <authorList>
            <person name="Nierman W.C."/>
            <person name="DeShazer D."/>
            <person name="Kim H.S."/>
            <person name="Tettelin H."/>
            <person name="Nelson K.E."/>
            <person name="Feldblyum T.V."/>
            <person name="Ulrich R.L."/>
            <person name="Ronning C.M."/>
            <person name="Brinkac L.M."/>
            <person name="Daugherty S.C."/>
            <person name="Davidsen T.D."/>
            <person name="DeBoy R.T."/>
            <person name="Dimitrov G."/>
            <person name="Dodson R.J."/>
            <person name="Durkin A.S."/>
            <person name="Gwinn M.L."/>
            <person name="Haft D.H."/>
            <person name="Khouri H.M."/>
            <person name="Kolonay J.F."/>
            <person name="Madupu R."/>
            <person name="Mohammoud Y."/>
            <person name="Nelson W.C."/>
            <person name="Radune D."/>
            <person name="Romero C.M."/>
            <person name="Sarria S."/>
            <person name="Selengut J."/>
            <person name="Shamblin C."/>
            <person name="Sullivan S.A."/>
            <person name="White O."/>
            <person name="Yu Y."/>
            <person name="Zafar N."/>
            <person name="Zhou L."/>
            <person name="Fraser C.M."/>
        </authorList>
    </citation>
    <scope>NUCLEOTIDE SEQUENCE [LARGE SCALE GENOMIC DNA]</scope>
    <source>
        <strain>ATCC 23344</strain>
    </source>
</reference>
<gene>
    <name evidence="1" type="primary">fliE</name>
    <name type="ordered locus">BMA3282</name>
</gene>
<feature type="chain" id="PRO_1000045848" description="Flagellar hook-basal body complex protein FliE">
    <location>
        <begin position="1"/>
        <end position="113"/>
    </location>
</feature>
<protein>
    <recommendedName>
        <fullName evidence="1">Flagellar hook-basal body complex protein FliE</fullName>
    </recommendedName>
</protein>
<organism>
    <name type="scientific">Burkholderia mallei (strain ATCC 23344)</name>
    <dbReference type="NCBI Taxonomy" id="243160"/>
    <lineage>
        <taxon>Bacteria</taxon>
        <taxon>Pseudomonadati</taxon>
        <taxon>Pseudomonadota</taxon>
        <taxon>Betaproteobacteria</taxon>
        <taxon>Burkholderiales</taxon>
        <taxon>Burkholderiaceae</taxon>
        <taxon>Burkholderia</taxon>
        <taxon>pseudomallei group</taxon>
    </lineage>
</organism>
<sequence length="113" mass="11449">MVAPVNGIASALQQMQAMAAQAAGGASPATSLAGSGAASAGSFASAMKASLDKISGDQQKALGEAHAFEIGAQNVSLNDVMVDMQKANIGFQFGLQVRNKLVSAYNEIMQMSV</sequence>
<evidence type="ECO:0000255" key="1">
    <source>
        <dbReference type="HAMAP-Rule" id="MF_00724"/>
    </source>
</evidence>
<keyword id="KW-0975">Bacterial flagellum</keyword>
<keyword id="KW-1185">Reference proteome</keyword>
<comment type="subcellular location">
    <subcellularLocation>
        <location evidence="1">Bacterial flagellum basal body</location>
    </subcellularLocation>
</comment>
<comment type="similarity">
    <text evidence="1">Belongs to the FliE family.</text>
</comment>
<accession>Q62EX3</accession>
<proteinExistence type="inferred from homology"/>